<comment type="function">
    <text evidence="1">Catalyzes the hydrolytic cleavage of the carbon-nitrogen bond in imidazolone-5-propanoate to yield N-formimidoyl-L-glutamate. It is the third step in the universal histidine degradation pathway.</text>
</comment>
<comment type="catalytic activity">
    <reaction evidence="1">
        <text>4-imidazolone-5-propanoate + H2O = N-formimidoyl-L-glutamate</text>
        <dbReference type="Rhea" id="RHEA:23660"/>
        <dbReference type="ChEBI" id="CHEBI:15377"/>
        <dbReference type="ChEBI" id="CHEBI:58928"/>
        <dbReference type="ChEBI" id="CHEBI:77893"/>
        <dbReference type="EC" id="3.5.2.7"/>
    </reaction>
</comment>
<comment type="cofactor">
    <cofactor evidence="1">
        <name>Zn(2+)</name>
        <dbReference type="ChEBI" id="CHEBI:29105"/>
    </cofactor>
    <cofactor evidence="1">
        <name>Fe(3+)</name>
        <dbReference type="ChEBI" id="CHEBI:29034"/>
    </cofactor>
    <text evidence="1">Binds 1 zinc or iron ion per subunit.</text>
</comment>
<comment type="pathway">
    <text evidence="1">Amino-acid degradation; L-histidine degradation into L-glutamate; N-formimidoyl-L-glutamate from L-histidine: step 3/3.</text>
</comment>
<comment type="subcellular location">
    <subcellularLocation>
        <location evidence="1">Cytoplasm</location>
    </subcellularLocation>
</comment>
<comment type="similarity">
    <text evidence="1">Belongs to the metallo-dependent hydrolases superfamily. HutI family.</text>
</comment>
<accession>B5XIX5</accession>
<protein>
    <recommendedName>
        <fullName evidence="1">Imidazolonepropionase</fullName>
        <ecNumber evidence="1">3.5.2.7</ecNumber>
    </recommendedName>
    <alternativeName>
        <fullName evidence="1">Imidazolone-5-propionate hydrolase</fullName>
    </alternativeName>
</protein>
<keyword id="KW-0963">Cytoplasm</keyword>
<keyword id="KW-0369">Histidine metabolism</keyword>
<keyword id="KW-0378">Hydrolase</keyword>
<keyword id="KW-0408">Iron</keyword>
<keyword id="KW-0479">Metal-binding</keyword>
<keyword id="KW-0862">Zinc</keyword>
<evidence type="ECO:0000255" key="1">
    <source>
        <dbReference type="HAMAP-Rule" id="MF_00372"/>
    </source>
</evidence>
<sequence>MVADVLLTHFNQLFCLNDPGHPLTGQEMKKATIVEDGYIAIKDGLIVALGSGEPDAELVGPQTIMRSYKGKIATPGIIDCHTHLVYGGSREHEFAKKLAGVSYLDILAQGGGILSTVRATRSASFDNLYQKSKRLLDYMLLHGVTTVEAKSGYGLDWETEKRQLDVVAALEKDHPIDLVSTFMAAHAIPEEYKGNPKAYLDVIIKDMLPVVKEENLAEFCDIFCEKNVFTADESRYLLSKAKEMGFKLRIHADEIASIGGVDVAAELSAVSAEHLMMITDDGIAKLIGAGVIGNLLPATTFSLMEDTYAPARKMIDAGMAITLSTDSNPGSCPTANMQFVMQLGCFMLRLTPIEVLNAVTINAAYSVNRQERVGSLTVGKEADIAIFDAPNIDYPFYFFATNLIHQVYKKGQLTVDRGRIL</sequence>
<gene>
    <name evidence="1" type="primary">hutI</name>
    <name type="ordered locus">Spy49_1723c</name>
</gene>
<organism>
    <name type="scientific">Streptococcus pyogenes serotype M49 (strain NZ131)</name>
    <dbReference type="NCBI Taxonomy" id="471876"/>
    <lineage>
        <taxon>Bacteria</taxon>
        <taxon>Bacillati</taxon>
        <taxon>Bacillota</taxon>
        <taxon>Bacilli</taxon>
        <taxon>Lactobacillales</taxon>
        <taxon>Streptococcaceae</taxon>
        <taxon>Streptococcus</taxon>
    </lineage>
</organism>
<name>HUTI_STRPZ</name>
<dbReference type="EC" id="3.5.2.7" evidence="1"/>
<dbReference type="EMBL" id="CP000829">
    <property type="protein sequence ID" value="ACI61974.1"/>
    <property type="molecule type" value="Genomic_DNA"/>
</dbReference>
<dbReference type="SMR" id="B5XIX5"/>
<dbReference type="KEGG" id="soz:Spy49_1723c"/>
<dbReference type="HOGENOM" id="CLU_041647_0_1_9"/>
<dbReference type="UniPathway" id="UPA00379">
    <property type="reaction ID" value="UER00551"/>
</dbReference>
<dbReference type="Proteomes" id="UP000001039">
    <property type="component" value="Chromosome"/>
</dbReference>
<dbReference type="GO" id="GO:0005737">
    <property type="term" value="C:cytoplasm"/>
    <property type="evidence" value="ECO:0007669"/>
    <property type="project" value="UniProtKB-SubCell"/>
</dbReference>
<dbReference type="GO" id="GO:0050480">
    <property type="term" value="F:imidazolonepropionase activity"/>
    <property type="evidence" value="ECO:0007669"/>
    <property type="project" value="UniProtKB-UniRule"/>
</dbReference>
<dbReference type="GO" id="GO:0005506">
    <property type="term" value="F:iron ion binding"/>
    <property type="evidence" value="ECO:0007669"/>
    <property type="project" value="UniProtKB-UniRule"/>
</dbReference>
<dbReference type="GO" id="GO:0008270">
    <property type="term" value="F:zinc ion binding"/>
    <property type="evidence" value="ECO:0007669"/>
    <property type="project" value="UniProtKB-UniRule"/>
</dbReference>
<dbReference type="GO" id="GO:0019556">
    <property type="term" value="P:L-histidine catabolic process to glutamate and formamide"/>
    <property type="evidence" value="ECO:0007669"/>
    <property type="project" value="UniProtKB-UniPathway"/>
</dbReference>
<dbReference type="GO" id="GO:0019557">
    <property type="term" value="P:L-histidine catabolic process to glutamate and formate"/>
    <property type="evidence" value="ECO:0007669"/>
    <property type="project" value="UniProtKB-UniPathway"/>
</dbReference>
<dbReference type="CDD" id="cd01296">
    <property type="entry name" value="Imidazolone-5PH"/>
    <property type="match status" value="1"/>
</dbReference>
<dbReference type="FunFam" id="3.20.20.140:FF:000007">
    <property type="entry name" value="Imidazolonepropionase"/>
    <property type="match status" value="1"/>
</dbReference>
<dbReference type="Gene3D" id="3.20.20.140">
    <property type="entry name" value="Metal-dependent hydrolases"/>
    <property type="match status" value="1"/>
</dbReference>
<dbReference type="Gene3D" id="2.30.40.10">
    <property type="entry name" value="Urease, subunit C, domain 1"/>
    <property type="match status" value="1"/>
</dbReference>
<dbReference type="HAMAP" id="MF_00372">
    <property type="entry name" value="HutI"/>
    <property type="match status" value="1"/>
</dbReference>
<dbReference type="InterPro" id="IPR006680">
    <property type="entry name" value="Amidohydro-rel"/>
</dbReference>
<dbReference type="InterPro" id="IPR005920">
    <property type="entry name" value="HutI"/>
</dbReference>
<dbReference type="InterPro" id="IPR011059">
    <property type="entry name" value="Metal-dep_hydrolase_composite"/>
</dbReference>
<dbReference type="InterPro" id="IPR032466">
    <property type="entry name" value="Metal_Hydrolase"/>
</dbReference>
<dbReference type="NCBIfam" id="TIGR01224">
    <property type="entry name" value="hutI"/>
    <property type="match status" value="1"/>
</dbReference>
<dbReference type="PANTHER" id="PTHR42752">
    <property type="entry name" value="IMIDAZOLONEPROPIONASE"/>
    <property type="match status" value="1"/>
</dbReference>
<dbReference type="PANTHER" id="PTHR42752:SF1">
    <property type="entry name" value="IMIDAZOLONEPROPIONASE-RELATED"/>
    <property type="match status" value="1"/>
</dbReference>
<dbReference type="Pfam" id="PF01979">
    <property type="entry name" value="Amidohydro_1"/>
    <property type="match status" value="1"/>
</dbReference>
<dbReference type="SUPFAM" id="SSF51338">
    <property type="entry name" value="Composite domain of metallo-dependent hydrolases"/>
    <property type="match status" value="1"/>
</dbReference>
<dbReference type="SUPFAM" id="SSF51556">
    <property type="entry name" value="Metallo-dependent hydrolases"/>
    <property type="match status" value="1"/>
</dbReference>
<proteinExistence type="inferred from homology"/>
<feature type="chain" id="PRO_1000121560" description="Imidazolonepropionase">
    <location>
        <begin position="1"/>
        <end position="421"/>
    </location>
</feature>
<feature type="binding site" evidence="1">
    <location>
        <position position="81"/>
    </location>
    <ligand>
        <name>Fe(3+)</name>
        <dbReference type="ChEBI" id="CHEBI:29034"/>
    </ligand>
</feature>
<feature type="binding site" evidence="1">
    <location>
        <position position="81"/>
    </location>
    <ligand>
        <name>Zn(2+)</name>
        <dbReference type="ChEBI" id="CHEBI:29105"/>
    </ligand>
</feature>
<feature type="binding site" evidence="1">
    <location>
        <position position="83"/>
    </location>
    <ligand>
        <name>Fe(3+)</name>
        <dbReference type="ChEBI" id="CHEBI:29034"/>
    </ligand>
</feature>
<feature type="binding site" evidence="1">
    <location>
        <position position="83"/>
    </location>
    <ligand>
        <name>Zn(2+)</name>
        <dbReference type="ChEBI" id="CHEBI:29105"/>
    </ligand>
</feature>
<feature type="binding site" evidence="1">
    <location>
        <position position="90"/>
    </location>
    <ligand>
        <name>4-imidazolone-5-propanoate</name>
        <dbReference type="ChEBI" id="CHEBI:77893"/>
    </ligand>
</feature>
<feature type="binding site" evidence="1">
    <location>
        <position position="153"/>
    </location>
    <ligand>
        <name>4-imidazolone-5-propanoate</name>
        <dbReference type="ChEBI" id="CHEBI:77893"/>
    </ligand>
</feature>
<feature type="binding site" evidence="1">
    <location>
        <position position="153"/>
    </location>
    <ligand>
        <name>N-formimidoyl-L-glutamate</name>
        <dbReference type="ChEBI" id="CHEBI:58928"/>
    </ligand>
</feature>
<feature type="binding site" evidence="1">
    <location>
        <position position="186"/>
    </location>
    <ligand>
        <name>4-imidazolone-5-propanoate</name>
        <dbReference type="ChEBI" id="CHEBI:77893"/>
    </ligand>
</feature>
<feature type="binding site" evidence="1">
    <location>
        <position position="251"/>
    </location>
    <ligand>
        <name>Fe(3+)</name>
        <dbReference type="ChEBI" id="CHEBI:29034"/>
    </ligand>
</feature>
<feature type="binding site" evidence="1">
    <location>
        <position position="251"/>
    </location>
    <ligand>
        <name>Zn(2+)</name>
        <dbReference type="ChEBI" id="CHEBI:29105"/>
    </ligand>
</feature>
<feature type="binding site" evidence="1">
    <location>
        <position position="254"/>
    </location>
    <ligand>
        <name>4-imidazolone-5-propanoate</name>
        <dbReference type="ChEBI" id="CHEBI:77893"/>
    </ligand>
</feature>
<feature type="binding site" evidence="1">
    <location>
        <position position="326"/>
    </location>
    <ligand>
        <name>Fe(3+)</name>
        <dbReference type="ChEBI" id="CHEBI:29034"/>
    </ligand>
</feature>
<feature type="binding site" evidence="1">
    <location>
        <position position="326"/>
    </location>
    <ligand>
        <name>Zn(2+)</name>
        <dbReference type="ChEBI" id="CHEBI:29105"/>
    </ligand>
</feature>
<feature type="binding site" evidence="1">
    <location>
        <position position="328"/>
    </location>
    <ligand>
        <name>N-formimidoyl-L-glutamate</name>
        <dbReference type="ChEBI" id="CHEBI:58928"/>
    </ligand>
</feature>
<feature type="binding site" evidence="1">
    <location>
        <position position="330"/>
    </location>
    <ligand>
        <name>N-formimidoyl-L-glutamate</name>
        <dbReference type="ChEBI" id="CHEBI:58928"/>
    </ligand>
</feature>
<feature type="binding site" evidence="1">
    <location>
        <position position="331"/>
    </location>
    <ligand>
        <name>4-imidazolone-5-propanoate</name>
        <dbReference type="ChEBI" id="CHEBI:77893"/>
    </ligand>
</feature>
<reference key="1">
    <citation type="journal article" date="2008" name="J. Bacteriol.">
        <title>Genome sequence of a nephritogenic and highly transformable M49 strain of Streptococcus pyogenes.</title>
        <authorList>
            <person name="McShan W.M."/>
            <person name="Ferretti J.J."/>
            <person name="Karasawa T."/>
            <person name="Suvorov A.N."/>
            <person name="Lin S."/>
            <person name="Qin B."/>
            <person name="Jia H."/>
            <person name="Kenton S."/>
            <person name="Najar F."/>
            <person name="Wu H."/>
            <person name="Scott J."/>
            <person name="Roe B.A."/>
            <person name="Savic D.J."/>
        </authorList>
    </citation>
    <scope>NUCLEOTIDE SEQUENCE [LARGE SCALE GENOMIC DNA]</scope>
    <source>
        <strain>NZ131</strain>
    </source>
</reference>